<feature type="chain" id="PRO_0000190933" description="Tetraacyldisaccharide 4'-kinase">
    <location>
        <begin position="1"/>
        <end position="344"/>
    </location>
</feature>
<feature type="binding site" evidence="1">
    <location>
        <begin position="65"/>
        <end position="72"/>
    </location>
    <ligand>
        <name>ATP</name>
        <dbReference type="ChEBI" id="CHEBI:30616"/>
    </ligand>
</feature>
<accession>Q9K0D7</accession>
<sequence length="344" mass="37008">MPNCFKFHTVIERHWQKPYPVLSFLLKPLSGLFAKIAAKRRTDFLSGKRQSEKLPVPVVVVGNIHAGGTGKTPIVAALVSGLQEKGVKVGIISRGYGRKSKAVHVLNAESRAEDAGDEPLLLFRKTGAPTAVGSSRAEAGRALLAAHPDIGLIVADDGLQHYALRRDVEIAVFPAADTGRTDLDLLPNGSLREPLLRLDSVDAVVVSGGKADALFRPSENMFHSRIEAGRIYRLNNPSEILDTGRLKNQTVVAVAGIAKPARFFDSLRNMGITVKRTVALPDHADISAADLPDADAVIITEKDAVKFSDGICTDNVWVLPVCAIIEPDLAAFVLERLEDVPKAV</sequence>
<organism>
    <name type="scientific">Neisseria meningitidis serogroup B (strain ATCC BAA-335 / MC58)</name>
    <dbReference type="NCBI Taxonomy" id="122586"/>
    <lineage>
        <taxon>Bacteria</taxon>
        <taxon>Pseudomonadati</taxon>
        <taxon>Pseudomonadota</taxon>
        <taxon>Betaproteobacteria</taxon>
        <taxon>Neisseriales</taxon>
        <taxon>Neisseriaceae</taxon>
        <taxon>Neisseria</taxon>
    </lineage>
</organism>
<proteinExistence type="inferred from homology"/>
<evidence type="ECO:0000255" key="1">
    <source>
        <dbReference type="HAMAP-Rule" id="MF_00409"/>
    </source>
</evidence>
<protein>
    <recommendedName>
        <fullName evidence="1">Tetraacyldisaccharide 4'-kinase</fullName>
        <ecNumber evidence="1">2.7.1.130</ecNumber>
    </recommendedName>
    <alternativeName>
        <fullName evidence="1">Lipid A 4'-kinase</fullName>
    </alternativeName>
</protein>
<dbReference type="EC" id="2.7.1.130" evidence="1"/>
<dbReference type="EMBL" id="AE002098">
    <property type="protein sequence ID" value="AAF41090.1"/>
    <property type="molecule type" value="Genomic_DNA"/>
</dbReference>
<dbReference type="PIR" id="F81170">
    <property type="entry name" value="F81170"/>
</dbReference>
<dbReference type="RefSeq" id="NP_273714.1">
    <property type="nucleotide sequence ID" value="NC_003112.2"/>
</dbReference>
<dbReference type="RefSeq" id="WP_002217704.1">
    <property type="nucleotide sequence ID" value="NC_003112.2"/>
</dbReference>
<dbReference type="SMR" id="Q9K0D7"/>
<dbReference type="FunCoup" id="Q9K0D7">
    <property type="interactions" value="199"/>
</dbReference>
<dbReference type="STRING" id="122586.NMB0672"/>
<dbReference type="PaxDb" id="122586-NMB0672"/>
<dbReference type="KEGG" id="nme:NMB0672"/>
<dbReference type="PATRIC" id="fig|122586.8.peg.842"/>
<dbReference type="HOGENOM" id="CLU_038816_2_0_4"/>
<dbReference type="InParanoid" id="Q9K0D7"/>
<dbReference type="OrthoDB" id="9766423at2"/>
<dbReference type="UniPathway" id="UPA00359">
    <property type="reaction ID" value="UER00482"/>
</dbReference>
<dbReference type="Proteomes" id="UP000000425">
    <property type="component" value="Chromosome"/>
</dbReference>
<dbReference type="GO" id="GO:0005886">
    <property type="term" value="C:plasma membrane"/>
    <property type="evidence" value="ECO:0000318"/>
    <property type="project" value="GO_Central"/>
</dbReference>
<dbReference type="GO" id="GO:0005524">
    <property type="term" value="F:ATP binding"/>
    <property type="evidence" value="ECO:0007669"/>
    <property type="project" value="UniProtKB-UniRule"/>
</dbReference>
<dbReference type="GO" id="GO:0009029">
    <property type="term" value="F:tetraacyldisaccharide 4'-kinase activity"/>
    <property type="evidence" value="ECO:0000318"/>
    <property type="project" value="GO_Central"/>
</dbReference>
<dbReference type="GO" id="GO:0009245">
    <property type="term" value="P:lipid A biosynthetic process"/>
    <property type="evidence" value="ECO:0000318"/>
    <property type="project" value="GO_Central"/>
</dbReference>
<dbReference type="GO" id="GO:0009244">
    <property type="term" value="P:lipopolysaccharide core region biosynthetic process"/>
    <property type="evidence" value="ECO:0000318"/>
    <property type="project" value="GO_Central"/>
</dbReference>
<dbReference type="HAMAP" id="MF_00409">
    <property type="entry name" value="LpxK"/>
    <property type="match status" value="1"/>
</dbReference>
<dbReference type="InterPro" id="IPR003758">
    <property type="entry name" value="LpxK"/>
</dbReference>
<dbReference type="InterPro" id="IPR027417">
    <property type="entry name" value="P-loop_NTPase"/>
</dbReference>
<dbReference type="NCBIfam" id="TIGR00682">
    <property type="entry name" value="lpxK"/>
    <property type="match status" value="1"/>
</dbReference>
<dbReference type="PANTHER" id="PTHR42724">
    <property type="entry name" value="TETRAACYLDISACCHARIDE 4'-KINASE"/>
    <property type="match status" value="1"/>
</dbReference>
<dbReference type="PANTHER" id="PTHR42724:SF1">
    <property type="entry name" value="TETRAACYLDISACCHARIDE 4'-KINASE, MITOCHONDRIAL-RELATED"/>
    <property type="match status" value="1"/>
</dbReference>
<dbReference type="Pfam" id="PF02606">
    <property type="entry name" value="LpxK"/>
    <property type="match status" value="1"/>
</dbReference>
<dbReference type="SUPFAM" id="SSF52540">
    <property type="entry name" value="P-loop containing nucleoside triphosphate hydrolases"/>
    <property type="match status" value="1"/>
</dbReference>
<keyword id="KW-0067">ATP-binding</keyword>
<keyword id="KW-0418">Kinase</keyword>
<keyword id="KW-0441">Lipid A biosynthesis</keyword>
<keyword id="KW-0444">Lipid biosynthesis</keyword>
<keyword id="KW-0443">Lipid metabolism</keyword>
<keyword id="KW-0547">Nucleotide-binding</keyword>
<keyword id="KW-1185">Reference proteome</keyword>
<keyword id="KW-0808">Transferase</keyword>
<gene>
    <name evidence="1" type="primary">lpxK</name>
    <name type="ordered locus">NMB0672</name>
</gene>
<comment type="function">
    <text evidence="1">Transfers the gamma-phosphate of ATP to the 4'-position of a tetraacyldisaccharide 1-phosphate intermediate (termed DS-1-P) to form tetraacyldisaccharide 1,4'-bis-phosphate (lipid IVA).</text>
</comment>
<comment type="catalytic activity">
    <reaction evidence="1">
        <text>a lipid A disaccharide + ATP = a lipid IVA + ADP + H(+)</text>
        <dbReference type="Rhea" id="RHEA:67840"/>
        <dbReference type="ChEBI" id="CHEBI:15378"/>
        <dbReference type="ChEBI" id="CHEBI:30616"/>
        <dbReference type="ChEBI" id="CHEBI:176343"/>
        <dbReference type="ChEBI" id="CHEBI:176425"/>
        <dbReference type="ChEBI" id="CHEBI:456216"/>
        <dbReference type="EC" id="2.7.1.130"/>
    </reaction>
</comment>
<comment type="pathway">
    <text evidence="1">Glycolipid biosynthesis; lipid IV(A) biosynthesis; lipid IV(A) from (3R)-3-hydroxytetradecanoyl-[acyl-carrier-protein] and UDP-N-acetyl-alpha-D-glucosamine: step 6/6.</text>
</comment>
<comment type="similarity">
    <text evidence="1">Belongs to the LpxK family.</text>
</comment>
<name>LPXK_NEIMB</name>
<reference key="1">
    <citation type="journal article" date="2000" name="Science">
        <title>Complete genome sequence of Neisseria meningitidis serogroup B strain MC58.</title>
        <authorList>
            <person name="Tettelin H."/>
            <person name="Saunders N.J."/>
            <person name="Heidelberg J.F."/>
            <person name="Jeffries A.C."/>
            <person name="Nelson K.E."/>
            <person name="Eisen J.A."/>
            <person name="Ketchum K.A."/>
            <person name="Hood D.W."/>
            <person name="Peden J.F."/>
            <person name="Dodson R.J."/>
            <person name="Nelson W.C."/>
            <person name="Gwinn M.L."/>
            <person name="DeBoy R.T."/>
            <person name="Peterson J.D."/>
            <person name="Hickey E.K."/>
            <person name="Haft D.H."/>
            <person name="Salzberg S.L."/>
            <person name="White O."/>
            <person name="Fleischmann R.D."/>
            <person name="Dougherty B.A."/>
            <person name="Mason T.M."/>
            <person name="Ciecko A."/>
            <person name="Parksey D.S."/>
            <person name="Blair E."/>
            <person name="Cittone H."/>
            <person name="Clark E.B."/>
            <person name="Cotton M.D."/>
            <person name="Utterback T.R."/>
            <person name="Khouri H.M."/>
            <person name="Qin H."/>
            <person name="Vamathevan J.J."/>
            <person name="Gill J."/>
            <person name="Scarlato V."/>
            <person name="Masignani V."/>
            <person name="Pizza M."/>
            <person name="Grandi G."/>
            <person name="Sun L."/>
            <person name="Smith H.O."/>
            <person name="Fraser C.M."/>
            <person name="Moxon E.R."/>
            <person name="Rappuoli R."/>
            <person name="Venter J.C."/>
        </authorList>
    </citation>
    <scope>NUCLEOTIDE SEQUENCE [LARGE SCALE GENOMIC DNA]</scope>
    <source>
        <strain>ATCC BAA-335 / MC58</strain>
    </source>
</reference>